<evidence type="ECO:0000269" key="1">
    <source>
    </source>
</evidence>
<evidence type="ECO:0000269" key="2">
    <source>
    </source>
</evidence>
<evidence type="ECO:0000269" key="3">
    <source>
    </source>
</evidence>
<evidence type="ECO:0000269" key="4">
    <source>
    </source>
</evidence>
<evidence type="ECO:0000303" key="5">
    <source>
    </source>
</evidence>
<evidence type="ECO:0000303" key="6">
    <source>
    </source>
</evidence>
<evidence type="ECO:0000303" key="7">
    <source>
    </source>
</evidence>
<evidence type="ECO:0000305" key="8"/>
<evidence type="ECO:0000312" key="9">
    <source>
        <dbReference type="SGD" id="S000007605"/>
    </source>
</evidence>
<reference key="1">
    <citation type="journal article" date="1997" name="Nature">
        <title>The nucleotide sequence of Saccharomyces cerevisiae chromosome IV.</title>
        <authorList>
            <person name="Jacq C."/>
            <person name="Alt-Moerbe J."/>
            <person name="Andre B."/>
            <person name="Arnold W."/>
            <person name="Bahr A."/>
            <person name="Ballesta J.P.G."/>
            <person name="Bargues M."/>
            <person name="Baron L."/>
            <person name="Becker A."/>
            <person name="Biteau N."/>
            <person name="Bloecker H."/>
            <person name="Blugeon C."/>
            <person name="Boskovic J."/>
            <person name="Brandt P."/>
            <person name="Brueckner M."/>
            <person name="Buitrago M.J."/>
            <person name="Coster F."/>
            <person name="Delaveau T."/>
            <person name="del Rey F."/>
            <person name="Dujon B."/>
            <person name="Eide L.G."/>
            <person name="Garcia-Cantalejo J.M."/>
            <person name="Goffeau A."/>
            <person name="Gomez-Peris A."/>
            <person name="Granotier C."/>
            <person name="Hanemann V."/>
            <person name="Hankeln T."/>
            <person name="Hoheisel J.D."/>
            <person name="Jaeger W."/>
            <person name="Jimenez A."/>
            <person name="Jonniaux J.-L."/>
            <person name="Kraemer C."/>
            <person name="Kuester H."/>
            <person name="Laamanen P."/>
            <person name="Legros Y."/>
            <person name="Louis E.J."/>
            <person name="Moeller-Rieker S."/>
            <person name="Monnet A."/>
            <person name="Moro M."/>
            <person name="Mueller-Auer S."/>
            <person name="Nussbaumer B."/>
            <person name="Paricio N."/>
            <person name="Paulin L."/>
            <person name="Perea J."/>
            <person name="Perez-Alonso M."/>
            <person name="Perez-Ortin J.E."/>
            <person name="Pohl T.M."/>
            <person name="Prydz H."/>
            <person name="Purnelle B."/>
            <person name="Rasmussen S.W."/>
            <person name="Remacha M.A."/>
            <person name="Revuelta J.L."/>
            <person name="Rieger M."/>
            <person name="Salom D."/>
            <person name="Saluz H.P."/>
            <person name="Saiz J.E."/>
            <person name="Saren A.-M."/>
            <person name="Schaefer M."/>
            <person name="Scharfe M."/>
            <person name="Schmidt E.R."/>
            <person name="Schneider C."/>
            <person name="Scholler P."/>
            <person name="Schwarz S."/>
            <person name="Soler-Mira A."/>
            <person name="Urrestarazu L.A."/>
            <person name="Verhasselt P."/>
            <person name="Vissers S."/>
            <person name="Voet M."/>
            <person name="Volckaert G."/>
            <person name="Wagner G."/>
            <person name="Wambutt R."/>
            <person name="Wedler E."/>
            <person name="Wedler H."/>
            <person name="Woelfl S."/>
            <person name="Harris D.E."/>
            <person name="Bowman S."/>
            <person name="Brown D."/>
            <person name="Churcher C.M."/>
            <person name="Connor R."/>
            <person name="Dedman K."/>
            <person name="Gentles S."/>
            <person name="Hamlin N."/>
            <person name="Hunt S."/>
            <person name="Jones L."/>
            <person name="McDonald S."/>
            <person name="Murphy L.D."/>
            <person name="Niblett D."/>
            <person name="Odell C."/>
            <person name="Oliver K."/>
            <person name="Rajandream M.A."/>
            <person name="Richards C."/>
            <person name="Shore L."/>
            <person name="Walsh S.V."/>
            <person name="Barrell B.G."/>
            <person name="Dietrich F.S."/>
            <person name="Mulligan J.T."/>
            <person name="Allen E."/>
            <person name="Araujo R."/>
            <person name="Aviles E."/>
            <person name="Berno A."/>
            <person name="Carpenter J."/>
            <person name="Chen E."/>
            <person name="Cherry J.M."/>
            <person name="Chung E."/>
            <person name="Duncan M."/>
            <person name="Hunicke-Smith S."/>
            <person name="Hyman R.W."/>
            <person name="Komp C."/>
            <person name="Lashkari D."/>
            <person name="Lew H."/>
            <person name="Lin D."/>
            <person name="Mosedale D."/>
            <person name="Nakahara K."/>
            <person name="Namath A."/>
            <person name="Oefner P."/>
            <person name="Oh C."/>
            <person name="Petel F.X."/>
            <person name="Roberts D."/>
            <person name="Schramm S."/>
            <person name="Schroeder M."/>
            <person name="Shogren T."/>
            <person name="Shroff N."/>
            <person name="Winant A."/>
            <person name="Yelton M.A."/>
            <person name="Botstein D."/>
            <person name="Davis R.W."/>
            <person name="Johnston M."/>
            <person name="Andrews S."/>
            <person name="Brinkman R."/>
            <person name="Cooper J."/>
            <person name="Ding H."/>
            <person name="Du Z."/>
            <person name="Favello A."/>
            <person name="Fulton L."/>
            <person name="Gattung S."/>
            <person name="Greco T."/>
            <person name="Hallsworth K."/>
            <person name="Hawkins J."/>
            <person name="Hillier L.W."/>
            <person name="Jier M."/>
            <person name="Johnson D."/>
            <person name="Johnston L."/>
            <person name="Kirsten J."/>
            <person name="Kucaba T."/>
            <person name="Langston Y."/>
            <person name="Latreille P."/>
            <person name="Le T."/>
            <person name="Mardis E."/>
            <person name="Menezes S."/>
            <person name="Miller N."/>
            <person name="Nhan M."/>
            <person name="Pauley A."/>
            <person name="Peluso D."/>
            <person name="Rifkin L."/>
            <person name="Riles L."/>
            <person name="Taich A."/>
            <person name="Trevaskis E."/>
            <person name="Vignati D."/>
            <person name="Wilcox L."/>
            <person name="Wohldman P."/>
            <person name="Vaudin M."/>
            <person name="Wilson R."/>
            <person name="Waterston R."/>
            <person name="Albermann K."/>
            <person name="Hani J."/>
            <person name="Heumann K."/>
            <person name="Kleine K."/>
            <person name="Mewes H.-W."/>
            <person name="Zollner A."/>
            <person name="Zaccaria P."/>
        </authorList>
    </citation>
    <scope>NUCLEOTIDE SEQUENCE [LARGE SCALE GENOMIC DNA]</scope>
    <source>
        <strain>ATCC 204508 / S288c</strain>
    </source>
</reference>
<reference key="2">
    <citation type="journal article" date="2014" name="G3 (Bethesda)">
        <title>The reference genome sequence of Saccharomyces cerevisiae: Then and now.</title>
        <authorList>
            <person name="Engel S.R."/>
            <person name="Dietrich F.S."/>
            <person name="Fisk D.G."/>
            <person name="Binkley G."/>
            <person name="Balakrishnan R."/>
            <person name="Costanzo M.C."/>
            <person name="Dwight S.S."/>
            <person name="Hitz B.C."/>
            <person name="Karra K."/>
            <person name="Nash R.S."/>
            <person name="Weng S."/>
            <person name="Wong E.D."/>
            <person name="Lloyd P."/>
            <person name="Skrzypek M.S."/>
            <person name="Miyasato S.R."/>
            <person name="Simison M."/>
            <person name="Cherry J.M."/>
        </authorList>
    </citation>
    <scope>GENOME REANNOTATION</scope>
    <source>
        <strain>ATCC 204508 / S288c</strain>
    </source>
</reference>
<reference key="3">
    <citation type="journal article" date="2000" name="FEBS Lett.">
        <title>Genomic exploration of the hemiascomycetous yeasts: 4. The genome of Saccharomyces cerevisiae revisited.</title>
        <authorList>
            <person name="Blandin G."/>
            <person name="Durrens P."/>
            <person name="Tekaia F."/>
            <person name="Aigle M."/>
            <person name="Bolotin-Fukuhara M."/>
            <person name="Bon E."/>
            <person name="Casaregola S."/>
            <person name="de Montigny J."/>
            <person name="Gaillardin C."/>
            <person name="Lepingle A."/>
            <person name="Llorente B."/>
            <person name="Malpertuy A."/>
            <person name="Neuveglise C."/>
            <person name="Ozier-Kalogeropoulos O."/>
            <person name="Perrin A."/>
            <person name="Potier S."/>
            <person name="Souciet J.-L."/>
            <person name="Talla E."/>
            <person name="Toffano-Nioche C."/>
            <person name="Wesolowski-Louvel M."/>
            <person name="Marck C."/>
            <person name="Dujon B."/>
        </authorList>
    </citation>
    <scope>GENOME REANNOTATION</scope>
</reference>
<reference key="4">
    <citation type="journal article" date="2003" name="Genome Res.">
        <title>Systematic discovery of new genes in the Saccharomyces cerevisiae genome.</title>
        <authorList>
            <person name="Kessler M.M."/>
            <person name="Zeng Q."/>
            <person name="Hogan S."/>
            <person name="Cook R."/>
            <person name="Morales A.J."/>
            <person name="Cottarel G."/>
        </authorList>
    </citation>
    <scope>GENOME REANNOTATION</scope>
</reference>
<reference key="5">
    <citation type="journal article" date="2003" name="Nature">
        <title>Global analysis of protein localization in budding yeast.</title>
        <authorList>
            <person name="Huh W.-K."/>
            <person name="Falvo J.V."/>
            <person name="Gerke L.C."/>
            <person name="Carroll A.S."/>
            <person name="Howson R.W."/>
            <person name="Weissman J.S."/>
            <person name="O'Shea E.K."/>
        </authorList>
    </citation>
    <scope>SUBCELLULAR LOCATION [LARGE SCALE ANALYSIS]</scope>
</reference>
<reference key="6">
    <citation type="journal article" date="2003" name="Nature">
        <title>Global analysis of protein expression in yeast.</title>
        <authorList>
            <person name="Ghaemmaghami S."/>
            <person name="Huh W.-K."/>
            <person name="Bower K."/>
            <person name="Howson R.W."/>
            <person name="Belle A."/>
            <person name="Dephoure N."/>
            <person name="O'Shea E.K."/>
            <person name="Weissman J.S."/>
        </authorList>
    </citation>
    <scope>LEVEL OF PROTEIN EXPRESSION [LARGE SCALE ANALYSIS]</scope>
</reference>
<reference key="7">
    <citation type="journal article" date="2009" name="Nat. Genet.">
        <title>SDHAF1, encoding a LYR complex-II specific assembly factor, is mutated in SDH-defective infantile leukoencephalopathy.</title>
        <authorList>
            <person name="Ghezzi D."/>
            <person name="Goffrini P."/>
            <person name="Uziel G."/>
            <person name="Horvath R."/>
            <person name="Klopstock T."/>
            <person name="Lochmuller H."/>
            <person name="D'Adamo P."/>
            <person name="Gasparini P."/>
            <person name="Strom T.M."/>
            <person name="Prokisch H."/>
            <person name="Invernizzi F."/>
            <person name="Ferrero I."/>
            <person name="Zeviani M."/>
        </authorList>
    </citation>
    <scope>FUNCTION</scope>
    <scope>DISRUPTION PHENOTYPE</scope>
    <scope>MUTAGENESIS OF ARG-61 AND GLY-63</scope>
</reference>
<reference key="8">
    <citation type="journal article" date="2014" name="Cell Metab.">
        <title>The LYR factors SDHAF1 and SDHAF3 mediate maturation of the iron-sulfur subunit of succinate dehydrogenase.</title>
        <authorList>
            <person name="Na U."/>
            <person name="Yu W."/>
            <person name="Cox J."/>
            <person name="Bricker D.K."/>
            <person name="Brockmann K."/>
            <person name="Rutter J."/>
            <person name="Thummel C.S."/>
            <person name="Winge D.R."/>
        </authorList>
    </citation>
    <scope>FUNCTION</scope>
    <scope>INTERACTION WITH SDH2</scope>
</reference>
<gene>
    <name evidence="7" type="primary">SDH6</name>
    <name evidence="9" type="ordered locus">YDR379C-A</name>
    <name evidence="5" type="ORF">smORF139</name>
    <name evidence="5" type="ORF">smORF8</name>
</gene>
<feature type="chain" id="PRO_0000253849" description="Succinate dehydrogenase assembly factor 1, mitochondrial">
    <location>
        <begin position="1"/>
        <end position="79"/>
    </location>
</feature>
<feature type="mutagenesis site" description="Abolishes the ability to complement a yeast strain carrying a deletion for this gene." evidence="3">
    <original>R</original>
    <variation>P</variation>
    <location>
        <position position="61"/>
    </location>
</feature>
<feature type="mutagenesis site" description="Abolishes the ability to complement a yeast strain carrying a deletion for this gene." evidence="3">
    <original>G</original>
    <variation>R</variation>
    <location>
        <position position="63"/>
    </location>
</feature>
<sequence length="79" mass="9352">MPKRLSGLQKEVLHLYRASIRTAHTKPKENQVNFVNYIHEEFGKYRNLPRKDFTTIEHLLRVGNKKIATFSHPELTNIH</sequence>
<dbReference type="EMBL" id="U28373">
    <property type="status" value="NOT_ANNOTATED_CDS"/>
    <property type="molecule type" value="Genomic_DNA"/>
</dbReference>
<dbReference type="EMBL" id="BK006938">
    <property type="protein sequence ID" value="DAA12222.1"/>
    <property type="molecule type" value="Genomic_DNA"/>
</dbReference>
<dbReference type="RefSeq" id="NP_076888.3">
    <property type="nucleotide sequence ID" value="NM_001184471.3"/>
</dbReference>
<dbReference type="SMR" id="Q3E785"/>
<dbReference type="BioGRID" id="32439">
    <property type="interactions" value="45"/>
</dbReference>
<dbReference type="FunCoup" id="Q3E785">
    <property type="interactions" value="125"/>
</dbReference>
<dbReference type="IntAct" id="Q3E785">
    <property type="interactions" value="3"/>
</dbReference>
<dbReference type="STRING" id="4932.YDR379C-A"/>
<dbReference type="PaxDb" id="4932-YDR379C-A"/>
<dbReference type="PeptideAtlas" id="Q3E785"/>
<dbReference type="EnsemblFungi" id="YDR379C-A_mRNA">
    <property type="protein sequence ID" value="YDR379C-A"/>
    <property type="gene ID" value="YDR379C-A"/>
</dbReference>
<dbReference type="GeneID" id="851986"/>
<dbReference type="KEGG" id="sce:YDR379C-A"/>
<dbReference type="AGR" id="SGD:S000007605"/>
<dbReference type="SGD" id="S000007605">
    <property type="gene designation" value="SDH6"/>
</dbReference>
<dbReference type="VEuPathDB" id="FungiDB:YDR379C-A"/>
<dbReference type="eggNOG" id="KOG4620">
    <property type="taxonomic scope" value="Eukaryota"/>
</dbReference>
<dbReference type="HOGENOM" id="CLU_154777_1_1_1"/>
<dbReference type="InParanoid" id="Q3E785"/>
<dbReference type="OMA" id="FFYIEHL"/>
<dbReference type="OrthoDB" id="273010at2759"/>
<dbReference type="BioCyc" id="YEAST:G3O-30111-MONOMER"/>
<dbReference type="BioGRID-ORCS" id="851986">
    <property type="hits" value="0 hits in 10 CRISPR screens"/>
</dbReference>
<dbReference type="PRO" id="PR:Q3E785"/>
<dbReference type="Proteomes" id="UP000002311">
    <property type="component" value="Chromosome IV"/>
</dbReference>
<dbReference type="RNAct" id="Q3E785">
    <property type="molecule type" value="protein"/>
</dbReference>
<dbReference type="GO" id="GO:0005759">
    <property type="term" value="C:mitochondrial matrix"/>
    <property type="evidence" value="ECO:0007669"/>
    <property type="project" value="UniProtKB-SubCell"/>
</dbReference>
<dbReference type="GO" id="GO:0005739">
    <property type="term" value="C:mitochondrion"/>
    <property type="evidence" value="ECO:0007005"/>
    <property type="project" value="SGD"/>
</dbReference>
<dbReference type="GO" id="GO:0016226">
    <property type="term" value="P:iron-sulfur cluster assembly"/>
    <property type="evidence" value="ECO:0000303"/>
    <property type="project" value="UniProtKB"/>
</dbReference>
<dbReference type="GO" id="GO:0034553">
    <property type="term" value="P:mitochondrial respiratory chain complex II assembly"/>
    <property type="evidence" value="ECO:0000315"/>
    <property type="project" value="UniProtKB"/>
</dbReference>
<dbReference type="CDD" id="cd20268">
    <property type="entry name" value="Complex1_LYR_SDHAF1_LYRM8"/>
    <property type="match status" value="1"/>
</dbReference>
<dbReference type="InterPro" id="IPR008011">
    <property type="entry name" value="Complex1_LYR_dom"/>
</dbReference>
<dbReference type="InterPro" id="IPR045295">
    <property type="entry name" value="Complex1_LYR_SDHAF1_LYRM8"/>
</dbReference>
<dbReference type="PANTHER" id="PTHR13675">
    <property type="entry name" value="LYR MOTIF-CONTAINING PROTEIN 2"/>
    <property type="match status" value="1"/>
</dbReference>
<dbReference type="PANTHER" id="PTHR13675:SF1">
    <property type="entry name" value="SUCCINATE DEHYDROGENASE ASSEMBLY FACTOR 1, MITOCHONDRIAL"/>
    <property type="match status" value="1"/>
</dbReference>
<dbReference type="Pfam" id="PF05347">
    <property type="entry name" value="Complex1_LYR"/>
    <property type="match status" value="1"/>
</dbReference>
<accession>Q3E785</accession>
<accession>D6VT12</accession>
<comment type="function">
    <text evidence="3">Plays an essential role in the assembly of succinate dehydrogenase (SDH), an enzyme complex (also referred to as respiratory complex II) that is a component of both the tricarboxylic acid (TCA) cycle and the mitochondrial electron transport chain, and which couples the oxidation of succinate to fumarate with the reduction of ubiquinone (coenzyme Q) to ubiquinol. Promotes maturation of the iron-sulfur protein subunit SDH2 of the SDH catalytic dimer, protecting it from the deleterious effects of oxidants. Acts together with SDHAF3 (SDH7).</text>
</comment>
<comment type="subunit">
    <text evidence="4">Interacts with SDH2 within an SDH1-SDH2 subcomplex.</text>
</comment>
<comment type="subcellular location">
    <subcellularLocation>
        <location evidence="1">Mitochondrion matrix</location>
    </subcellularLocation>
</comment>
<comment type="disruption phenotype">
    <text evidence="3">OXPHOS incompetent because of a profound and specific reduction of complex II activity.</text>
</comment>
<comment type="miscellaneous">
    <text evidence="2">Present with 861 molecules/cell in log phase SD medium.</text>
</comment>
<comment type="similarity">
    <text evidence="8">Belongs to the complex I LYR family. SDHAF1 subfamily.</text>
</comment>
<name>SDHF1_YEAST</name>
<protein>
    <recommendedName>
        <fullName evidence="6">Succinate dehydrogenase assembly factor 1, mitochondrial</fullName>
        <shortName evidence="6">SDH assembly factor 1</shortName>
        <shortName evidence="6">SDHAF1</shortName>
    </recommendedName>
</protein>
<proteinExistence type="evidence at protein level"/>
<organism>
    <name type="scientific">Saccharomyces cerevisiae (strain ATCC 204508 / S288c)</name>
    <name type="common">Baker's yeast</name>
    <dbReference type="NCBI Taxonomy" id="559292"/>
    <lineage>
        <taxon>Eukaryota</taxon>
        <taxon>Fungi</taxon>
        <taxon>Dikarya</taxon>
        <taxon>Ascomycota</taxon>
        <taxon>Saccharomycotina</taxon>
        <taxon>Saccharomycetes</taxon>
        <taxon>Saccharomycetales</taxon>
        <taxon>Saccharomycetaceae</taxon>
        <taxon>Saccharomyces</taxon>
    </lineage>
</organism>
<keyword id="KW-0143">Chaperone</keyword>
<keyword id="KW-0496">Mitochondrion</keyword>
<keyword id="KW-1185">Reference proteome</keyword>